<dbReference type="EC" id="4.3.3.6" evidence="1"/>
<dbReference type="EC" id="3.5.1.2" evidence="1"/>
<dbReference type="EMBL" id="CP000969">
    <property type="protein sequence ID" value="ACB08819.1"/>
    <property type="molecule type" value="Genomic_DNA"/>
</dbReference>
<dbReference type="RefSeq" id="WP_012310556.1">
    <property type="nucleotide sequence ID" value="NC_010483.1"/>
</dbReference>
<dbReference type="SMR" id="B1L921"/>
<dbReference type="MEROPS" id="C26.A32"/>
<dbReference type="KEGG" id="trq:TRQ2_0463"/>
<dbReference type="HOGENOM" id="CLU_069674_2_0_0"/>
<dbReference type="UniPathway" id="UPA00245"/>
<dbReference type="Proteomes" id="UP000001687">
    <property type="component" value="Chromosome"/>
</dbReference>
<dbReference type="GO" id="GO:0005829">
    <property type="term" value="C:cytosol"/>
    <property type="evidence" value="ECO:0007669"/>
    <property type="project" value="TreeGrafter"/>
</dbReference>
<dbReference type="GO" id="GO:1903600">
    <property type="term" value="C:glutaminase complex"/>
    <property type="evidence" value="ECO:0007669"/>
    <property type="project" value="TreeGrafter"/>
</dbReference>
<dbReference type="GO" id="GO:0004359">
    <property type="term" value="F:glutaminase activity"/>
    <property type="evidence" value="ECO:0007669"/>
    <property type="project" value="UniProtKB-UniRule"/>
</dbReference>
<dbReference type="GO" id="GO:0036381">
    <property type="term" value="F:pyridoxal 5'-phosphate synthase (glutamine hydrolysing) activity"/>
    <property type="evidence" value="ECO:0007669"/>
    <property type="project" value="UniProtKB-UniRule"/>
</dbReference>
<dbReference type="GO" id="GO:0006543">
    <property type="term" value="P:glutamine catabolic process"/>
    <property type="evidence" value="ECO:0007669"/>
    <property type="project" value="UniProtKB-UniRule"/>
</dbReference>
<dbReference type="GO" id="GO:0042823">
    <property type="term" value="P:pyridoxal phosphate biosynthetic process"/>
    <property type="evidence" value="ECO:0007669"/>
    <property type="project" value="UniProtKB-UniRule"/>
</dbReference>
<dbReference type="GO" id="GO:0008614">
    <property type="term" value="P:pyridoxine metabolic process"/>
    <property type="evidence" value="ECO:0007669"/>
    <property type="project" value="TreeGrafter"/>
</dbReference>
<dbReference type="CDD" id="cd01749">
    <property type="entry name" value="GATase1_PB"/>
    <property type="match status" value="1"/>
</dbReference>
<dbReference type="FunFam" id="3.40.50.880:FF:000041">
    <property type="entry name" value="Glutamine amidotransferase subunit pdxT, putative"/>
    <property type="match status" value="1"/>
</dbReference>
<dbReference type="Gene3D" id="3.40.50.880">
    <property type="match status" value="1"/>
</dbReference>
<dbReference type="HAMAP" id="MF_01615">
    <property type="entry name" value="PdxT"/>
    <property type="match status" value="1"/>
</dbReference>
<dbReference type="InterPro" id="IPR029062">
    <property type="entry name" value="Class_I_gatase-like"/>
</dbReference>
<dbReference type="InterPro" id="IPR002161">
    <property type="entry name" value="PdxT/SNO"/>
</dbReference>
<dbReference type="InterPro" id="IPR021196">
    <property type="entry name" value="PdxT/SNO_CS"/>
</dbReference>
<dbReference type="NCBIfam" id="TIGR03800">
    <property type="entry name" value="PLP_synth_Pdx2"/>
    <property type="match status" value="1"/>
</dbReference>
<dbReference type="PANTHER" id="PTHR31559">
    <property type="entry name" value="PYRIDOXAL 5'-PHOSPHATE SYNTHASE SUBUNIT SNO"/>
    <property type="match status" value="1"/>
</dbReference>
<dbReference type="PANTHER" id="PTHR31559:SF0">
    <property type="entry name" value="PYRIDOXAL 5'-PHOSPHATE SYNTHASE SUBUNIT SNO1-RELATED"/>
    <property type="match status" value="1"/>
</dbReference>
<dbReference type="Pfam" id="PF01174">
    <property type="entry name" value="SNO"/>
    <property type="match status" value="1"/>
</dbReference>
<dbReference type="PIRSF" id="PIRSF005639">
    <property type="entry name" value="Glut_amidoT_SNO"/>
    <property type="match status" value="1"/>
</dbReference>
<dbReference type="SUPFAM" id="SSF52317">
    <property type="entry name" value="Class I glutamine amidotransferase-like"/>
    <property type="match status" value="1"/>
</dbReference>
<dbReference type="PROSITE" id="PS01236">
    <property type="entry name" value="PDXT_SNO_1"/>
    <property type="match status" value="1"/>
</dbReference>
<dbReference type="PROSITE" id="PS51130">
    <property type="entry name" value="PDXT_SNO_2"/>
    <property type="match status" value="1"/>
</dbReference>
<feature type="chain" id="PRO_1000185914" description="Pyridoxal 5'-phosphate synthase subunit PdxT">
    <location>
        <begin position="1"/>
        <end position="188"/>
    </location>
</feature>
<feature type="active site" description="Nucleophile" evidence="1">
    <location>
        <position position="78"/>
    </location>
</feature>
<feature type="active site" description="Charge relay system" evidence="1">
    <location>
        <position position="170"/>
    </location>
</feature>
<feature type="active site" description="Charge relay system" evidence="1">
    <location>
        <position position="172"/>
    </location>
</feature>
<feature type="binding site" evidence="1">
    <location>
        <begin position="46"/>
        <end position="48"/>
    </location>
    <ligand>
        <name>L-glutamine</name>
        <dbReference type="ChEBI" id="CHEBI:58359"/>
    </ligand>
</feature>
<feature type="binding site" evidence="1">
    <location>
        <position position="105"/>
    </location>
    <ligand>
        <name>L-glutamine</name>
        <dbReference type="ChEBI" id="CHEBI:58359"/>
    </ligand>
</feature>
<feature type="binding site" evidence="1">
    <location>
        <begin position="134"/>
        <end position="135"/>
    </location>
    <ligand>
        <name>L-glutamine</name>
        <dbReference type="ChEBI" id="CHEBI:58359"/>
    </ligand>
</feature>
<gene>
    <name evidence="1" type="primary">pdxT</name>
    <name type="ordered locus">TRQ2_0463</name>
</gene>
<comment type="function">
    <text evidence="1">Catalyzes the hydrolysis of glutamine to glutamate and ammonia as part of the biosynthesis of pyridoxal 5'-phosphate. The resulting ammonia molecule is channeled to the active site of PdxS.</text>
</comment>
<comment type="catalytic activity">
    <reaction evidence="1">
        <text>aldehydo-D-ribose 5-phosphate + D-glyceraldehyde 3-phosphate + L-glutamine = pyridoxal 5'-phosphate + L-glutamate + phosphate + 3 H2O + H(+)</text>
        <dbReference type="Rhea" id="RHEA:31507"/>
        <dbReference type="ChEBI" id="CHEBI:15377"/>
        <dbReference type="ChEBI" id="CHEBI:15378"/>
        <dbReference type="ChEBI" id="CHEBI:29985"/>
        <dbReference type="ChEBI" id="CHEBI:43474"/>
        <dbReference type="ChEBI" id="CHEBI:58273"/>
        <dbReference type="ChEBI" id="CHEBI:58359"/>
        <dbReference type="ChEBI" id="CHEBI:59776"/>
        <dbReference type="ChEBI" id="CHEBI:597326"/>
        <dbReference type="EC" id="4.3.3.6"/>
    </reaction>
</comment>
<comment type="catalytic activity">
    <reaction evidence="1">
        <text>L-glutamine + H2O = L-glutamate + NH4(+)</text>
        <dbReference type="Rhea" id="RHEA:15889"/>
        <dbReference type="ChEBI" id="CHEBI:15377"/>
        <dbReference type="ChEBI" id="CHEBI:28938"/>
        <dbReference type="ChEBI" id="CHEBI:29985"/>
        <dbReference type="ChEBI" id="CHEBI:58359"/>
        <dbReference type="EC" id="3.5.1.2"/>
    </reaction>
</comment>
<comment type="pathway">
    <text evidence="1">Cofactor biosynthesis; pyridoxal 5'-phosphate biosynthesis.</text>
</comment>
<comment type="subunit">
    <text evidence="1">In the presence of PdxS, forms a dodecamer of heterodimers. Only shows activity in the heterodimer.</text>
</comment>
<comment type="similarity">
    <text evidence="1">Belongs to the glutaminase PdxT/SNO family.</text>
</comment>
<organism>
    <name type="scientific">Thermotoga sp. (strain RQ2)</name>
    <dbReference type="NCBI Taxonomy" id="126740"/>
    <lineage>
        <taxon>Bacteria</taxon>
        <taxon>Thermotogati</taxon>
        <taxon>Thermotogota</taxon>
        <taxon>Thermotogae</taxon>
        <taxon>Thermotogales</taxon>
        <taxon>Thermotogaceae</taxon>
        <taxon>Thermotoga</taxon>
    </lineage>
</organism>
<name>PDXT_THESQ</name>
<evidence type="ECO:0000255" key="1">
    <source>
        <dbReference type="HAMAP-Rule" id="MF_01615"/>
    </source>
</evidence>
<keyword id="KW-0315">Glutamine amidotransferase</keyword>
<keyword id="KW-0378">Hydrolase</keyword>
<keyword id="KW-0456">Lyase</keyword>
<keyword id="KW-0663">Pyridoxal phosphate</keyword>
<accession>B1L921</accession>
<proteinExistence type="inferred from homology"/>
<reference key="1">
    <citation type="journal article" date="2011" name="J. Bacteriol.">
        <title>Genome sequence of Thermotoga sp. strain RQ2, a hyperthermophilic bacterium isolated from a geothermally heated region of the seafloor near Ribeira Quente, the Azores.</title>
        <authorList>
            <person name="Swithers K.S."/>
            <person name="DiPippo J.L."/>
            <person name="Bruce D.C."/>
            <person name="Detter C."/>
            <person name="Tapia R."/>
            <person name="Han S."/>
            <person name="Saunders E."/>
            <person name="Goodwin L.A."/>
            <person name="Han J."/>
            <person name="Woyke T."/>
            <person name="Pitluck S."/>
            <person name="Pennacchio L."/>
            <person name="Nolan M."/>
            <person name="Mikhailova N."/>
            <person name="Lykidis A."/>
            <person name="Land M.L."/>
            <person name="Brettin T."/>
            <person name="Stetter K.O."/>
            <person name="Nelson K.E."/>
            <person name="Gogarten J.P."/>
            <person name="Noll K.M."/>
        </authorList>
    </citation>
    <scope>NUCLEOTIDE SEQUENCE [LARGE SCALE GENOMIC DNA]</scope>
    <source>
        <strain>RQ2</strain>
    </source>
</reference>
<sequence>MKIGVLGVQGDVREHVEALHKLGVETLIVKLPEQLDMVDGLILPGGESTTMIRILKEMDMDEKLVERINNGLPVFATCAGVILLAKRIENYSQEKLGVLDITVERNAYGRQVESFETFVEIPAVGKDPFRAIFIRAPRIVETGKNVEILATYDYDPVLVKEGNILACTFHPELTDDLRLHRYFLEMVK</sequence>
<protein>
    <recommendedName>
        <fullName evidence="1">Pyridoxal 5'-phosphate synthase subunit PdxT</fullName>
        <ecNumber evidence="1">4.3.3.6</ecNumber>
    </recommendedName>
    <alternativeName>
        <fullName evidence="1">Pdx2</fullName>
    </alternativeName>
    <alternativeName>
        <fullName evidence="1">Pyridoxal 5'-phosphate synthase glutaminase subunit</fullName>
        <ecNumber evidence="1">3.5.1.2</ecNumber>
    </alternativeName>
</protein>